<proteinExistence type="evidence at protein level"/>
<organism>
    <name type="scientific">Arabidopsis thaliana</name>
    <name type="common">Mouse-ear cress</name>
    <dbReference type="NCBI Taxonomy" id="3702"/>
    <lineage>
        <taxon>Eukaryota</taxon>
        <taxon>Viridiplantae</taxon>
        <taxon>Streptophyta</taxon>
        <taxon>Embryophyta</taxon>
        <taxon>Tracheophyta</taxon>
        <taxon>Spermatophyta</taxon>
        <taxon>Magnoliopsida</taxon>
        <taxon>eudicotyledons</taxon>
        <taxon>Gunneridae</taxon>
        <taxon>Pentapetalae</taxon>
        <taxon>rosids</taxon>
        <taxon>malvids</taxon>
        <taxon>Brassicales</taxon>
        <taxon>Brassicaceae</taxon>
        <taxon>Camelineae</taxon>
        <taxon>Arabidopsis</taxon>
    </lineage>
</organism>
<keyword id="KW-0067">ATP-binding</keyword>
<keyword id="KW-1003">Cell membrane</keyword>
<keyword id="KW-0418">Kinase</keyword>
<keyword id="KW-0449">Lipoprotein</keyword>
<keyword id="KW-0472">Membrane</keyword>
<keyword id="KW-0547">Nucleotide-binding</keyword>
<keyword id="KW-0564">Palmitate</keyword>
<keyword id="KW-0597">Phosphoprotein</keyword>
<keyword id="KW-0611">Plant defense</keyword>
<keyword id="KW-1185">Reference proteome</keyword>
<keyword id="KW-0723">Serine/threonine-protein kinase</keyword>
<keyword id="KW-0808">Transferase</keyword>
<comment type="function">
    <text evidence="6">Involved in defense responses. Acts as a negative regulator of plant immune responses.</text>
</comment>
<comment type="catalytic activity">
    <reaction evidence="6">
        <text>L-seryl-[protein] + ATP = O-phospho-L-seryl-[protein] + ADP + H(+)</text>
        <dbReference type="Rhea" id="RHEA:17989"/>
        <dbReference type="Rhea" id="RHEA-COMP:9863"/>
        <dbReference type="Rhea" id="RHEA-COMP:11604"/>
        <dbReference type="ChEBI" id="CHEBI:15378"/>
        <dbReference type="ChEBI" id="CHEBI:29999"/>
        <dbReference type="ChEBI" id="CHEBI:30616"/>
        <dbReference type="ChEBI" id="CHEBI:83421"/>
        <dbReference type="ChEBI" id="CHEBI:456216"/>
        <dbReference type="EC" id="2.7.11.1"/>
    </reaction>
</comment>
<comment type="catalytic activity">
    <reaction evidence="6">
        <text>L-threonyl-[protein] + ATP = O-phospho-L-threonyl-[protein] + ADP + H(+)</text>
        <dbReference type="Rhea" id="RHEA:46608"/>
        <dbReference type="Rhea" id="RHEA-COMP:11060"/>
        <dbReference type="Rhea" id="RHEA-COMP:11605"/>
        <dbReference type="ChEBI" id="CHEBI:15378"/>
        <dbReference type="ChEBI" id="CHEBI:30013"/>
        <dbReference type="ChEBI" id="CHEBI:30616"/>
        <dbReference type="ChEBI" id="CHEBI:61977"/>
        <dbReference type="ChEBI" id="CHEBI:456216"/>
        <dbReference type="EC" id="2.7.11.1"/>
    </reaction>
</comment>
<comment type="subunit">
    <text evidence="6">Interacts with RBHOD. Interaction is disrupted by flagellin-induced immune signaling.</text>
</comment>
<comment type="subcellular location">
    <subcellularLocation>
        <location evidence="6">Cell membrane</location>
    </subcellularLocation>
</comment>
<comment type="induction">
    <text evidence="5">Down-regulated during infection by Plasmodiophora brassicae.</text>
</comment>
<comment type="disruption phenotype">
    <text evidence="6">No visible phenotype under normal growth conditions. Mutant plants exhibit enhanced disease resistance after inoculation with virulent Pseudomonas syringae, elevated basal-level expression of the PR1 defense marker gene, enhanced reactive oxygen species (ROS) burst in response to perception of bacterial microbial patterns, and accelerated flagellin-induced activation of MAP kinases.</text>
</comment>
<comment type="similarity">
    <text evidence="3">Belongs to the protein kinase superfamily. Ser/Thr protein kinase family.</text>
</comment>
<comment type="sequence caution" evidence="8">
    <conflict type="erroneous gene model prediction">
        <sequence resource="EMBL-CDS" id="BAB09992"/>
    </conflict>
</comment>
<name>PBL13_ARATH</name>
<evidence type="ECO:0000250" key="1">
    <source>
        <dbReference type="UniProtKB" id="O48814"/>
    </source>
</evidence>
<evidence type="ECO:0000250" key="2">
    <source>
        <dbReference type="UniProtKB" id="Q9FE20"/>
    </source>
</evidence>
<evidence type="ECO:0000255" key="3">
    <source>
        <dbReference type="PROSITE-ProRule" id="PRU00159"/>
    </source>
</evidence>
<evidence type="ECO:0000256" key="4">
    <source>
        <dbReference type="SAM" id="MobiDB-lite"/>
    </source>
</evidence>
<evidence type="ECO:0000269" key="5">
    <source>
    </source>
</evidence>
<evidence type="ECO:0000269" key="6">
    <source>
    </source>
</evidence>
<evidence type="ECO:0000303" key="7">
    <source>
    </source>
</evidence>
<evidence type="ECO:0000305" key="8"/>
<evidence type="ECO:0000312" key="9">
    <source>
        <dbReference type="Araport" id="AT5G35580"/>
    </source>
</evidence>
<evidence type="ECO:0000312" key="10">
    <source>
        <dbReference type="EMBL" id="AED93983.1"/>
    </source>
</evidence>
<evidence type="ECO:0000312" key="11">
    <source>
        <dbReference type="EMBL" id="BAB09992.1"/>
    </source>
</evidence>
<protein>
    <recommendedName>
        <fullName evidence="8">Serine/threonine-protein kinase PBL13</fullName>
        <ecNumber evidence="6">2.7.11.1</ecNumber>
    </recommendedName>
    <alternativeName>
        <fullName evidence="7">PBS1-like protein 13</fullName>
    </alternativeName>
    <alternativeName>
        <fullName evidence="10">Ser/Thr protein kinase ACIK1b</fullName>
    </alternativeName>
</protein>
<sequence length="494" mass="56172">MVLCFQDPDNIYSPKKTKKDDGERVITKQKSFLGLSILDISNPSSTTLSEDLSISLAGSDLHVFTQAELRVITQSFSSSNFLGEGGFGPVHKGFIDDKLRPGLKAQPVAVKLLDLDGLQGHREFMTEVMCLGKLKHPNLVKLIGYCCEEAHRLLVYEFMPRGSLESQLFRRCSLPLPWTTRLNIAYEAAKGLQFLHEAEKPIIYRDFKASNILLDSDYTAKLSDFGLAKDGPQGDDTHVSTRVMGTQGYAAPEYIMTGHLTAKSDVYSFGVVLLELLTGRKSVDIARSSRKETLVEWARPMLNDARKLGRIMDPRLEDQYSETGARKAATLAYQCLRYRPKTRPDISTVVSVLQDIKDYKDDIPIGIFTYTVPTKPRREVKETSLQNFDKPRRETKVTSLQNFDKTRREVKDTSLQNFDKTRREVKETSLQNFDKTRREVKETSLQNFDKPRNVSTTDNHQKFRSPAHTARNHRITLRNGYNSPMRNEAGGERY</sequence>
<gene>
    <name evidence="7" type="primary">PBL13</name>
    <name evidence="9" type="ordered locus">At5g35580</name>
    <name evidence="11" type="ORF">K2K18.3</name>
</gene>
<feature type="chain" id="PRO_0000438608" description="Serine/threonine-protein kinase PBL13">
    <location>
        <begin position="1"/>
        <end position="494"/>
    </location>
</feature>
<feature type="domain" description="Protein kinase" evidence="3">
    <location>
        <begin position="76"/>
        <end position="356"/>
    </location>
</feature>
<feature type="region of interest" description="Disordered" evidence="4">
    <location>
        <begin position="434"/>
        <end position="471"/>
    </location>
</feature>
<feature type="compositionally biased region" description="Polar residues" evidence="4">
    <location>
        <begin position="443"/>
        <end position="458"/>
    </location>
</feature>
<feature type="compositionally biased region" description="Basic residues" evidence="4">
    <location>
        <begin position="462"/>
        <end position="471"/>
    </location>
</feature>
<feature type="active site" description="Proton acceptor" evidence="3">
    <location>
        <position position="206"/>
    </location>
</feature>
<feature type="binding site" evidence="3">
    <location>
        <begin position="82"/>
        <end position="90"/>
    </location>
    <ligand>
        <name>ATP</name>
        <dbReference type="ChEBI" id="CHEBI:30616"/>
    </ligand>
</feature>
<feature type="binding site" evidence="3">
    <location>
        <position position="111"/>
    </location>
    <ligand>
        <name>ATP</name>
        <dbReference type="ChEBI" id="CHEBI:30616"/>
    </ligand>
</feature>
<feature type="modified residue" description="Phosphothreonine" evidence="1">
    <location>
        <position position="65"/>
    </location>
</feature>
<feature type="modified residue" description="Phosphotyrosine" evidence="1">
    <location>
        <position position="156"/>
    </location>
</feature>
<feature type="modified residue" description="Phosphoserine" evidence="1">
    <location>
        <position position="210"/>
    </location>
</feature>
<feature type="modified residue" description="Phosphoserine; by autocatalysis" evidence="6">
    <location>
        <position position="240"/>
    </location>
</feature>
<feature type="modified residue" description="Phosphothreonine" evidence="1">
    <location>
        <position position="241"/>
    </location>
</feature>
<feature type="modified residue" description="Phosphothreonine" evidence="1">
    <location>
        <position position="246"/>
    </location>
</feature>
<feature type="modified residue" description="Phosphotyrosine" evidence="1">
    <location>
        <position position="254"/>
    </location>
</feature>
<feature type="modified residue" description="Phosphoserine; by autocatalysis" evidence="6">
    <location>
        <position position="321"/>
    </location>
</feature>
<feature type="modified residue" description="Phosphothreonine; by autocatalysis" evidence="6">
    <location>
        <position position="323"/>
    </location>
</feature>
<feature type="modified residue" description="Phosphothreonine; by autocatalysis" evidence="6">
    <location>
        <position position="383"/>
    </location>
</feature>
<feature type="modified residue" description="Phosphoserine; by autocatalysis" evidence="6">
    <location>
        <position position="384"/>
    </location>
</feature>
<feature type="modified residue" description="Phosphothreonine; by autocatalysis" evidence="6">
    <location>
        <position position="395"/>
    </location>
</feature>
<feature type="modified residue" description="Phosphothreonine; by autocatalysis" evidence="6">
    <location>
        <position position="398"/>
    </location>
</feature>
<feature type="modified residue" description="Phosphothreonine; by autocatalysis" evidence="6">
    <location>
        <position position="406"/>
    </location>
</feature>
<feature type="modified residue" description="Phosphothreonine; by autocatalysis" evidence="6">
    <location>
        <position position="413"/>
    </location>
</feature>
<feature type="modified residue" description="Phosphothreonine; by autocatalysis" evidence="6">
    <location>
        <position position="421"/>
    </location>
</feature>
<feature type="modified residue" description="Phosphothreonine; by autocatalysis" evidence="6">
    <location>
        <position position="428"/>
    </location>
</feature>
<feature type="modified residue" description="Phosphoserine; by autocatalysis" evidence="6">
    <location>
        <position position="429"/>
    </location>
</feature>
<feature type="modified residue" description="Phosphothreonine; by autocatalysis" evidence="6">
    <location>
        <position position="443"/>
    </location>
</feature>
<feature type="modified residue" description="Phosphoserine; by autocatalysis" evidence="6">
    <location>
        <position position="444"/>
    </location>
</feature>
<feature type="modified residue" description="Phosphoserine; by autocatalysis" evidence="6">
    <location>
        <position position="455"/>
    </location>
</feature>
<feature type="modified residue" description="Phosphothreonine; by autocatalysis" evidence="6">
    <location>
        <position position="456"/>
    </location>
</feature>
<feature type="modified residue" description="Phosphotyrosine; by autocatalysis" evidence="6">
    <location>
        <position position="481"/>
    </location>
</feature>
<feature type="lipid moiety-binding region" description="S-palmitoyl cysteine" evidence="2">
    <location>
        <position position="4"/>
    </location>
</feature>
<feature type="mutagenesis site" description="Abolishes kinase activity." evidence="6">
    <original>K</original>
    <variation>A</variation>
    <location>
        <position position="111"/>
    </location>
</feature>
<feature type="sequence conflict" description="In Ref. 3; BAD94092." evidence="8" ref="3">
    <original>P</original>
    <variation>L</variation>
    <location>
        <position position="89"/>
    </location>
</feature>
<feature type="sequence conflict" description="In Ref. 3; BAD94092." evidence="8" ref="3">
    <original>D</original>
    <variation>G</variation>
    <location>
        <position position="404"/>
    </location>
</feature>
<dbReference type="EC" id="2.7.11.1" evidence="6"/>
<dbReference type="EMBL" id="AB023031">
    <property type="protein sequence ID" value="BAB09992.1"/>
    <property type="status" value="ALT_SEQ"/>
    <property type="molecule type" value="Genomic_DNA"/>
</dbReference>
<dbReference type="EMBL" id="CP002688">
    <property type="protein sequence ID" value="AED93983.1"/>
    <property type="molecule type" value="Genomic_DNA"/>
</dbReference>
<dbReference type="EMBL" id="AK221316">
    <property type="protein sequence ID" value="BAD94092.1"/>
    <property type="molecule type" value="mRNA"/>
</dbReference>
<dbReference type="RefSeq" id="NP_198408.2">
    <property type="nucleotide sequence ID" value="NM_122949.3"/>
</dbReference>
<dbReference type="SMR" id="F4JZW1"/>
<dbReference type="FunCoup" id="F4JZW1">
    <property type="interactions" value="2416"/>
</dbReference>
<dbReference type="STRING" id="3702.F4JZW1"/>
<dbReference type="iPTMnet" id="F4JZW1"/>
<dbReference type="PaxDb" id="3702-AT5G35580.1"/>
<dbReference type="ProteomicsDB" id="236441"/>
<dbReference type="EnsemblPlants" id="AT5G35580.1">
    <property type="protein sequence ID" value="AT5G35580.1"/>
    <property type="gene ID" value="AT5G35580"/>
</dbReference>
<dbReference type="GeneID" id="833523"/>
<dbReference type="Gramene" id="AT5G35580.1">
    <property type="protein sequence ID" value="AT5G35580.1"/>
    <property type="gene ID" value="AT5G35580"/>
</dbReference>
<dbReference type="KEGG" id="ath:AT5G35580"/>
<dbReference type="Araport" id="AT5G35580"/>
<dbReference type="TAIR" id="AT5G35580">
    <property type="gene designation" value="PBL13"/>
</dbReference>
<dbReference type="eggNOG" id="KOG1187">
    <property type="taxonomic scope" value="Eukaryota"/>
</dbReference>
<dbReference type="HOGENOM" id="CLU_000288_21_2_1"/>
<dbReference type="InParanoid" id="F4JZW1"/>
<dbReference type="OMA" id="HEVGSNS"/>
<dbReference type="OrthoDB" id="4062651at2759"/>
<dbReference type="PRO" id="PR:F4JZW1"/>
<dbReference type="Proteomes" id="UP000006548">
    <property type="component" value="Chromosome 5"/>
</dbReference>
<dbReference type="ExpressionAtlas" id="F4JZW1">
    <property type="expression patterns" value="baseline and differential"/>
</dbReference>
<dbReference type="GO" id="GO:0005886">
    <property type="term" value="C:plasma membrane"/>
    <property type="evidence" value="ECO:0000314"/>
    <property type="project" value="UniProtKB"/>
</dbReference>
<dbReference type="GO" id="GO:0005524">
    <property type="term" value="F:ATP binding"/>
    <property type="evidence" value="ECO:0007669"/>
    <property type="project" value="UniProtKB-KW"/>
</dbReference>
<dbReference type="GO" id="GO:0106310">
    <property type="term" value="F:protein serine kinase activity"/>
    <property type="evidence" value="ECO:0007669"/>
    <property type="project" value="RHEA"/>
</dbReference>
<dbReference type="GO" id="GO:0004674">
    <property type="term" value="F:protein serine/threonine kinase activity"/>
    <property type="evidence" value="ECO:0000314"/>
    <property type="project" value="UniProtKB"/>
</dbReference>
<dbReference type="GO" id="GO:0006952">
    <property type="term" value="P:defense response"/>
    <property type="evidence" value="ECO:0007669"/>
    <property type="project" value="UniProtKB-KW"/>
</dbReference>
<dbReference type="GO" id="GO:0050777">
    <property type="term" value="P:negative regulation of immune response"/>
    <property type="evidence" value="ECO:0000315"/>
    <property type="project" value="UniProtKB"/>
</dbReference>
<dbReference type="GO" id="GO:0006468">
    <property type="term" value="P:protein phosphorylation"/>
    <property type="evidence" value="ECO:0000314"/>
    <property type="project" value="UniProtKB"/>
</dbReference>
<dbReference type="CDD" id="cd14066">
    <property type="entry name" value="STKc_IRAK"/>
    <property type="match status" value="1"/>
</dbReference>
<dbReference type="FunFam" id="1.10.510.10:FF:000258">
    <property type="entry name" value="Probable serine/threonine-protein kinase PBL8"/>
    <property type="match status" value="1"/>
</dbReference>
<dbReference type="FunFam" id="3.30.200.20:FF:000228">
    <property type="entry name" value="Serine/threonine-protein kinase BIK1"/>
    <property type="match status" value="1"/>
</dbReference>
<dbReference type="Gene3D" id="3.30.200.20">
    <property type="entry name" value="Phosphorylase Kinase, domain 1"/>
    <property type="match status" value="1"/>
</dbReference>
<dbReference type="Gene3D" id="1.10.510.10">
    <property type="entry name" value="Transferase(Phosphotransferase) domain 1"/>
    <property type="match status" value="1"/>
</dbReference>
<dbReference type="InterPro" id="IPR011009">
    <property type="entry name" value="Kinase-like_dom_sf"/>
</dbReference>
<dbReference type="InterPro" id="IPR050823">
    <property type="entry name" value="Plant_Ser_Thr_Prot_Kinase"/>
</dbReference>
<dbReference type="InterPro" id="IPR000719">
    <property type="entry name" value="Prot_kinase_dom"/>
</dbReference>
<dbReference type="InterPro" id="IPR001245">
    <property type="entry name" value="Ser-Thr/Tyr_kinase_cat_dom"/>
</dbReference>
<dbReference type="InterPro" id="IPR008271">
    <property type="entry name" value="Ser/Thr_kinase_AS"/>
</dbReference>
<dbReference type="PANTHER" id="PTHR45621">
    <property type="entry name" value="OS01G0588500 PROTEIN-RELATED"/>
    <property type="match status" value="1"/>
</dbReference>
<dbReference type="Pfam" id="PF07714">
    <property type="entry name" value="PK_Tyr_Ser-Thr"/>
    <property type="match status" value="1"/>
</dbReference>
<dbReference type="SUPFAM" id="SSF56112">
    <property type="entry name" value="Protein kinase-like (PK-like)"/>
    <property type="match status" value="1"/>
</dbReference>
<dbReference type="PROSITE" id="PS50011">
    <property type="entry name" value="PROTEIN_KINASE_DOM"/>
    <property type="match status" value="1"/>
</dbReference>
<dbReference type="PROSITE" id="PS00108">
    <property type="entry name" value="PROTEIN_KINASE_ST"/>
    <property type="match status" value="1"/>
</dbReference>
<accession>F4JZW1</accession>
<accession>Q56YK6</accession>
<accession>Q9FH10</accession>
<reference key="1">
    <citation type="journal article" date="2000" name="DNA Res.">
        <title>Structural analysis of Arabidopsis thaliana chromosome 5. X. Sequence features of the regions of 3,076,755 bp covered by sixty P1 and TAC clones.</title>
        <authorList>
            <person name="Sato S."/>
            <person name="Nakamura Y."/>
            <person name="Kaneko T."/>
            <person name="Katoh T."/>
            <person name="Asamizu E."/>
            <person name="Kotani H."/>
            <person name="Tabata S."/>
        </authorList>
    </citation>
    <scope>NUCLEOTIDE SEQUENCE [LARGE SCALE GENOMIC DNA]</scope>
    <source>
        <strain>cv. Columbia</strain>
    </source>
</reference>
<reference key="2">
    <citation type="journal article" date="2017" name="Plant J.">
        <title>Araport11: a complete reannotation of the Arabidopsis thaliana reference genome.</title>
        <authorList>
            <person name="Cheng C.Y."/>
            <person name="Krishnakumar V."/>
            <person name="Chan A.P."/>
            <person name="Thibaud-Nissen F."/>
            <person name="Schobel S."/>
            <person name="Town C.D."/>
        </authorList>
    </citation>
    <scope>GENOME REANNOTATION</scope>
    <source>
        <strain>cv. Columbia</strain>
    </source>
</reference>
<reference key="3">
    <citation type="submission" date="2005-03" db="EMBL/GenBank/DDBJ databases">
        <title>Large-scale analysis of RIKEN Arabidopsis full-length (RAFL) cDNAs.</title>
        <authorList>
            <person name="Totoki Y."/>
            <person name="Seki M."/>
            <person name="Ishida J."/>
            <person name="Nakajima M."/>
            <person name="Enju A."/>
            <person name="Kamiya A."/>
            <person name="Narusaka M."/>
            <person name="Shin-i T."/>
            <person name="Nakagawa M."/>
            <person name="Sakamoto N."/>
            <person name="Oishi K."/>
            <person name="Kohara Y."/>
            <person name="Kobayashi M."/>
            <person name="Toyoda A."/>
            <person name="Sakaki Y."/>
            <person name="Sakurai T."/>
            <person name="Iida K."/>
            <person name="Akiyama K."/>
            <person name="Satou M."/>
            <person name="Toyoda T."/>
            <person name="Konagaya A."/>
            <person name="Carninci P."/>
            <person name="Kawai J."/>
            <person name="Hayashizaki Y."/>
            <person name="Shinozaki K."/>
        </authorList>
    </citation>
    <scope>NUCLEOTIDE SEQUENCE [LARGE SCALE MRNA]</scope>
    <source>
        <strain>cv. Columbia</strain>
    </source>
</reference>
<reference key="4">
    <citation type="journal article" date="2006" name="Mol. Plant Microbe Interact.">
        <title>Transcriptome analysis of Arabidopsis clubroots indicate a key role for cytokinins in disease development.</title>
        <authorList>
            <person name="Siemens J."/>
            <person name="Keller I."/>
            <person name="Sarx J."/>
            <person name="Kunz S."/>
            <person name="Schuller A."/>
            <person name="Nagel W."/>
            <person name="Schmuelling T."/>
            <person name="Parniske M."/>
            <person name="Ludwig-Mueller J."/>
        </authorList>
    </citation>
    <scope>INDUCTION</scope>
</reference>
<reference key="5">
    <citation type="journal article" date="2010" name="Cell Host Microbe">
        <title>Receptor-like cytoplasmic kinases integrate signaling from multiple plant immune receptors and are targeted by a Pseudomonas syringae effector.</title>
        <authorList>
            <person name="Zhang J."/>
            <person name="Li W."/>
            <person name="Xiang T."/>
            <person name="Liu Z."/>
            <person name="Laluk K."/>
            <person name="Ding X."/>
            <person name="Zou Y."/>
            <person name="Gao M."/>
            <person name="Zhang X."/>
            <person name="Chen S."/>
            <person name="Mengiste T."/>
            <person name="Zhang Y."/>
            <person name="Zhou J.M."/>
        </authorList>
    </citation>
    <scope>GENE FAMILY</scope>
    <scope>NOMENCLATURE</scope>
</reference>
<reference key="6">
    <citation type="journal article" date="2015" name="Plant Physiol.">
        <title>PBL13 is a serine/threonine protein kinase that negatively regulates Arabidopsis immune responses.</title>
        <authorList>
            <person name="Lin Z.J."/>
            <person name="Liebrand T.W."/>
            <person name="Yadeta K.A."/>
            <person name="Coaker G."/>
        </authorList>
    </citation>
    <scope>FUNCTION</scope>
    <scope>CATALYTIC ACTIVITY</scope>
    <scope>INTERACTION WITH RBOHD</scope>
    <scope>SUBCELLULAR LOCATION</scope>
    <scope>IDENTIFICATION BY MASS SPECTROMETRY</scope>
    <scope>PHOSPHORYLATION AT SER-240; SER-321; THR-323; THR-383; SER-384; THR-395; THR-398; THR-406; THR-413; THR-421; THR-428; SER-429; THR-443; SER-444; SER-455; THR-456 AND TYR-481</scope>
    <scope>MUTAGENESIS OF LYS-111</scope>
    <scope>DISRUPTION PHENOTYPE</scope>
</reference>